<comment type="function">
    <text evidence="1">NAD-binding protein involved in the addition of a carboxymethylaminomethyl (cmnm) group at the wobble position (U34) of certain tRNAs, forming tRNA-cmnm(5)s(2)U34.</text>
</comment>
<comment type="cofactor">
    <cofactor evidence="1">
        <name>FAD</name>
        <dbReference type="ChEBI" id="CHEBI:57692"/>
    </cofactor>
</comment>
<comment type="subunit">
    <text evidence="1">Homodimer. Heterotetramer of two MnmE and two MnmG subunits.</text>
</comment>
<comment type="subcellular location">
    <subcellularLocation>
        <location evidence="1">Cytoplasm</location>
    </subcellularLocation>
</comment>
<comment type="similarity">
    <text evidence="1">Belongs to the MnmG family.</text>
</comment>
<organism>
    <name type="scientific">Shewanella denitrificans (strain OS217 / ATCC BAA-1090 / DSM 15013)</name>
    <dbReference type="NCBI Taxonomy" id="318161"/>
    <lineage>
        <taxon>Bacteria</taxon>
        <taxon>Pseudomonadati</taxon>
        <taxon>Pseudomonadota</taxon>
        <taxon>Gammaproteobacteria</taxon>
        <taxon>Alteromonadales</taxon>
        <taxon>Shewanellaceae</taxon>
        <taxon>Shewanella</taxon>
    </lineage>
</organism>
<sequence>MHFHERFDVIVVGGGHAGTEAALASARMGSKTLLLTHNIDTLGQMSCNPAIGGIGKGHLVKEIDALGGAMAIATDFAGIQFRTLNSSKGPAVRATRAQADRALYRQKIQQILQSQPNLRIFQQAVDDLVVENNQVVGVVTQMGLAFESPTVVLTTGTFLSGKIHIGMQNYSGGRAGDPPAIALANRLRELPIRVGRLKTGTPPRIDANSIDFSQMTEQKGDTPLPVMSFVGNVDQHPRQISCHITHTNEKTHDIIRGGLDRSPMYSGVIEGIGPRYCPSIEDKIHRFADKTSHQIFIEPEGLSTNEIYPNGISTSLPFDVQLNLVRSIKGMENAEIIRPGYAIEYDYFDPRDLKNSLETKTINGLFFAGQINGTTGYEEAGAQGLLAGMNASLQVQGKETWCPRRDQAYLGVLVDDLSTLGTKEPYRMFTSRAEYRLLLREDNADLRLTEKGRELGLVNDDRWAKFTEKRESIELELQRLRGQWIHPNSPLLGVLNPELNTPISREASFEDLLRRPEMDYQKLMSLEGFGPGLEDPSAAEQVQIQVKYSGYIQRQQDEIDKAIRHENSLLPLDLDYQEVPGLSNEVIAKLNNHKPDTIGQASRISGITPAAISILLVHLKKRGLLRKTA</sequence>
<accession>Q12HP0</accession>
<gene>
    <name evidence="1" type="primary">mnmG</name>
    <name evidence="1" type="synonym">gidA</name>
    <name type="ordered locus">Sden_3763</name>
</gene>
<reference key="1">
    <citation type="submission" date="2006-03" db="EMBL/GenBank/DDBJ databases">
        <title>Complete sequence of Shewanella denitrificans OS217.</title>
        <authorList>
            <consortium name="US DOE Joint Genome Institute"/>
            <person name="Copeland A."/>
            <person name="Lucas S."/>
            <person name="Lapidus A."/>
            <person name="Barry K."/>
            <person name="Detter J.C."/>
            <person name="Glavina del Rio T."/>
            <person name="Hammon N."/>
            <person name="Israni S."/>
            <person name="Dalin E."/>
            <person name="Tice H."/>
            <person name="Pitluck S."/>
            <person name="Brettin T."/>
            <person name="Bruce D."/>
            <person name="Han C."/>
            <person name="Tapia R."/>
            <person name="Gilna P."/>
            <person name="Kiss H."/>
            <person name="Schmutz J."/>
            <person name="Larimer F."/>
            <person name="Land M."/>
            <person name="Hauser L."/>
            <person name="Kyrpides N."/>
            <person name="Lykidis A."/>
            <person name="Richardson P."/>
        </authorList>
    </citation>
    <scope>NUCLEOTIDE SEQUENCE [LARGE SCALE GENOMIC DNA]</scope>
    <source>
        <strain>OS217 / ATCC BAA-1090 / DSM 15013</strain>
    </source>
</reference>
<protein>
    <recommendedName>
        <fullName evidence="1">tRNA uridine 5-carboxymethylaminomethyl modification enzyme MnmG</fullName>
    </recommendedName>
    <alternativeName>
        <fullName evidence="1">Glucose-inhibited division protein A</fullName>
    </alternativeName>
</protein>
<dbReference type="EMBL" id="CP000302">
    <property type="protein sequence ID" value="ABE57036.1"/>
    <property type="molecule type" value="Genomic_DNA"/>
</dbReference>
<dbReference type="RefSeq" id="WP_011498174.1">
    <property type="nucleotide sequence ID" value="NC_007954.1"/>
</dbReference>
<dbReference type="SMR" id="Q12HP0"/>
<dbReference type="STRING" id="318161.Sden_3763"/>
<dbReference type="KEGG" id="sdn:Sden_3763"/>
<dbReference type="eggNOG" id="COG0445">
    <property type="taxonomic scope" value="Bacteria"/>
</dbReference>
<dbReference type="HOGENOM" id="CLU_007831_2_2_6"/>
<dbReference type="OrthoDB" id="9815560at2"/>
<dbReference type="Proteomes" id="UP000001982">
    <property type="component" value="Chromosome"/>
</dbReference>
<dbReference type="GO" id="GO:0005829">
    <property type="term" value="C:cytosol"/>
    <property type="evidence" value="ECO:0007669"/>
    <property type="project" value="TreeGrafter"/>
</dbReference>
<dbReference type="GO" id="GO:0050660">
    <property type="term" value="F:flavin adenine dinucleotide binding"/>
    <property type="evidence" value="ECO:0007669"/>
    <property type="project" value="UniProtKB-UniRule"/>
</dbReference>
<dbReference type="GO" id="GO:0030488">
    <property type="term" value="P:tRNA methylation"/>
    <property type="evidence" value="ECO:0007669"/>
    <property type="project" value="TreeGrafter"/>
</dbReference>
<dbReference type="GO" id="GO:0002098">
    <property type="term" value="P:tRNA wobble uridine modification"/>
    <property type="evidence" value="ECO:0007669"/>
    <property type="project" value="InterPro"/>
</dbReference>
<dbReference type="FunFam" id="1.10.10.1800:FF:000001">
    <property type="entry name" value="tRNA uridine 5-carboxymethylaminomethyl modification enzyme MnmG"/>
    <property type="match status" value="1"/>
</dbReference>
<dbReference type="FunFam" id="1.10.150.570:FF:000001">
    <property type="entry name" value="tRNA uridine 5-carboxymethylaminomethyl modification enzyme MnmG"/>
    <property type="match status" value="1"/>
</dbReference>
<dbReference type="FunFam" id="3.50.50.60:FF:000002">
    <property type="entry name" value="tRNA uridine 5-carboxymethylaminomethyl modification enzyme MnmG"/>
    <property type="match status" value="1"/>
</dbReference>
<dbReference type="FunFam" id="3.50.50.60:FF:000010">
    <property type="entry name" value="tRNA uridine 5-carboxymethylaminomethyl modification enzyme MnmG"/>
    <property type="match status" value="1"/>
</dbReference>
<dbReference type="Gene3D" id="3.50.50.60">
    <property type="entry name" value="FAD/NAD(P)-binding domain"/>
    <property type="match status" value="2"/>
</dbReference>
<dbReference type="Gene3D" id="1.10.150.570">
    <property type="entry name" value="GidA associated domain, C-terminal subdomain"/>
    <property type="match status" value="1"/>
</dbReference>
<dbReference type="Gene3D" id="1.10.10.1800">
    <property type="entry name" value="tRNA uridine 5-carboxymethylaminomethyl modification enzyme MnmG/GidA"/>
    <property type="match status" value="1"/>
</dbReference>
<dbReference type="HAMAP" id="MF_00129">
    <property type="entry name" value="MnmG_GidA"/>
    <property type="match status" value="1"/>
</dbReference>
<dbReference type="InterPro" id="IPR036188">
    <property type="entry name" value="FAD/NAD-bd_sf"/>
</dbReference>
<dbReference type="InterPro" id="IPR049312">
    <property type="entry name" value="GIDA_C_N"/>
</dbReference>
<dbReference type="InterPro" id="IPR004416">
    <property type="entry name" value="MnmG"/>
</dbReference>
<dbReference type="InterPro" id="IPR002218">
    <property type="entry name" value="MnmG-rel"/>
</dbReference>
<dbReference type="InterPro" id="IPR020595">
    <property type="entry name" value="MnmG-rel_CS"/>
</dbReference>
<dbReference type="InterPro" id="IPR026904">
    <property type="entry name" value="MnmG_C"/>
</dbReference>
<dbReference type="InterPro" id="IPR047001">
    <property type="entry name" value="MnmG_C_subdom"/>
</dbReference>
<dbReference type="InterPro" id="IPR044920">
    <property type="entry name" value="MnmG_C_subdom_sf"/>
</dbReference>
<dbReference type="InterPro" id="IPR040131">
    <property type="entry name" value="MnmG_N"/>
</dbReference>
<dbReference type="NCBIfam" id="TIGR00136">
    <property type="entry name" value="mnmG_gidA"/>
    <property type="match status" value="1"/>
</dbReference>
<dbReference type="PANTHER" id="PTHR11806">
    <property type="entry name" value="GLUCOSE INHIBITED DIVISION PROTEIN A"/>
    <property type="match status" value="1"/>
</dbReference>
<dbReference type="PANTHER" id="PTHR11806:SF0">
    <property type="entry name" value="PROTEIN MTO1 HOMOLOG, MITOCHONDRIAL"/>
    <property type="match status" value="1"/>
</dbReference>
<dbReference type="Pfam" id="PF01134">
    <property type="entry name" value="GIDA"/>
    <property type="match status" value="1"/>
</dbReference>
<dbReference type="Pfam" id="PF21680">
    <property type="entry name" value="GIDA_C_1st"/>
    <property type="match status" value="1"/>
</dbReference>
<dbReference type="Pfam" id="PF13932">
    <property type="entry name" value="SAM_GIDA_C"/>
    <property type="match status" value="1"/>
</dbReference>
<dbReference type="SMART" id="SM01228">
    <property type="entry name" value="GIDA_assoc_3"/>
    <property type="match status" value="1"/>
</dbReference>
<dbReference type="SUPFAM" id="SSF51905">
    <property type="entry name" value="FAD/NAD(P)-binding domain"/>
    <property type="match status" value="1"/>
</dbReference>
<dbReference type="PROSITE" id="PS01280">
    <property type="entry name" value="GIDA_1"/>
    <property type="match status" value="1"/>
</dbReference>
<dbReference type="PROSITE" id="PS01281">
    <property type="entry name" value="GIDA_2"/>
    <property type="match status" value="1"/>
</dbReference>
<feature type="chain" id="PRO_1000016671" description="tRNA uridine 5-carboxymethylaminomethyl modification enzyme MnmG">
    <location>
        <begin position="1"/>
        <end position="629"/>
    </location>
</feature>
<feature type="binding site" evidence="1">
    <location>
        <begin position="13"/>
        <end position="18"/>
    </location>
    <ligand>
        <name>FAD</name>
        <dbReference type="ChEBI" id="CHEBI:57692"/>
    </ligand>
</feature>
<feature type="binding site" evidence="1">
    <location>
        <begin position="273"/>
        <end position="287"/>
    </location>
    <ligand>
        <name>NAD(+)</name>
        <dbReference type="ChEBI" id="CHEBI:57540"/>
    </ligand>
</feature>
<proteinExistence type="inferred from homology"/>
<evidence type="ECO:0000255" key="1">
    <source>
        <dbReference type="HAMAP-Rule" id="MF_00129"/>
    </source>
</evidence>
<keyword id="KW-0963">Cytoplasm</keyword>
<keyword id="KW-0274">FAD</keyword>
<keyword id="KW-0285">Flavoprotein</keyword>
<keyword id="KW-0520">NAD</keyword>
<keyword id="KW-1185">Reference proteome</keyword>
<keyword id="KW-0819">tRNA processing</keyword>
<name>MNMG_SHEDO</name>